<evidence type="ECO:0000255" key="1">
    <source>
        <dbReference type="HAMAP-Rule" id="MF_00508"/>
    </source>
</evidence>
<evidence type="ECO:0000305" key="2"/>
<gene>
    <name evidence="1" type="primary">rpsJ</name>
    <name evidence="1" type="synonym">rps10</name>
    <name type="ordered locus">AM1_1793</name>
</gene>
<sequence length="105" mass="12170">MTTLQQQKIRIRLKAFDHRLLDTSCDKIVETAKRTNASPVGPIPLPTRRRIYCVLRSPHVDKDSREHFETRTHRRIVDIYQPSPKTIDALMKLDLPAGVDIEVKL</sequence>
<organism>
    <name type="scientific">Acaryochloris marina (strain MBIC 11017)</name>
    <dbReference type="NCBI Taxonomy" id="329726"/>
    <lineage>
        <taxon>Bacteria</taxon>
        <taxon>Bacillati</taxon>
        <taxon>Cyanobacteriota</taxon>
        <taxon>Cyanophyceae</taxon>
        <taxon>Acaryochloridales</taxon>
        <taxon>Acaryochloridaceae</taxon>
        <taxon>Acaryochloris</taxon>
    </lineage>
</organism>
<proteinExistence type="inferred from homology"/>
<dbReference type="EMBL" id="CP000828">
    <property type="protein sequence ID" value="ABW26814.1"/>
    <property type="molecule type" value="Genomic_DNA"/>
</dbReference>
<dbReference type="RefSeq" id="WP_010467965.1">
    <property type="nucleotide sequence ID" value="NC_009925.1"/>
</dbReference>
<dbReference type="SMR" id="B0CCC9"/>
<dbReference type="STRING" id="329726.AM1_1793"/>
<dbReference type="KEGG" id="amr:AM1_1793"/>
<dbReference type="eggNOG" id="COG0051">
    <property type="taxonomic scope" value="Bacteria"/>
</dbReference>
<dbReference type="HOGENOM" id="CLU_122625_1_3_3"/>
<dbReference type="OrthoDB" id="9804464at2"/>
<dbReference type="Proteomes" id="UP000000268">
    <property type="component" value="Chromosome"/>
</dbReference>
<dbReference type="GO" id="GO:1990904">
    <property type="term" value="C:ribonucleoprotein complex"/>
    <property type="evidence" value="ECO:0007669"/>
    <property type="project" value="UniProtKB-KW"/>
</dbReference>
<dbReference type="GO" id="GO:0005840">
    <property type="term" value="C:ribosome"/>
    <property type="evidence" value="ECO:0007669"/>
    <property type="project" value="UniProtKB-KW"/>
</dbReference>
<dbReference type="GO" id="GO:0003735">
    <property type="term" value="F:structural constituent of ribosome"/>
    <property type="evidence" value="ECO:0007669"/>
    <property type="project" value="InterPro"/>
</dbReference>
<dbReference type="GO" id="GO:0000049">
    <property type="term" value="F:tRNA binding"/>
    <property type="evidence" value="ECO:0007669"/>
    <property type="project" value="UniProtKB-UniRule"/>
</dbReference>
<dbReference type="GO" id="GO:0006412">
    <property type="term" value="P:translation"/>
    <property type="evidence" value="ECO:0007669"/>
    <property type="project" value="UniProtKB-UniRule"/>
</dbReference>
<dbReference type="FunFam" id="3.30.70.600:FF:000001">
    <property type="entry name" value="30S ribosomal protein S10"/>
    <property type="match status" value="1"/>
</dbReference>
<dbReference type="Gene3D" id="3.30.70.600">
    <property type="entry name" value="Ribosomal protein S10 domain"/>
    <property type="match status" value="1"/>
</dbReference>
<dbReference type="HAMAP" id="MF_00508">
    <property type="entry name" value="Ribosomal_uS10"/>
    <property type="match status" value="1"/>
</dbReference>
<dbReference type="InterPro" id="IPR001848">
    <property type="entry name" value="Ribosomal_uS10"/>
</dbReference>
<dbReference type="InterPro" id="IPR018268">
    <property type="entry name" value="Ribosomal_uS10_CS"/>
</dbReference>
<dbReference type="InterPro" id="IPR027486">
    <property type="entry name" value="Ribosomal_uS10_dom"/>
</dbReference>
<dbReference type="InterPro" id="IPR036838">
    <property type="entry name" value="Ribosomal_uS10_dom_sf"/>
</dbReference>
<dbReference type="NCBIfam" id="NF001861">
    <property type="entry name" value="PRK00596.1"/>
    <property type="match status" value="1"/>
</dbReference>
<dbReference type="NCBIfam" id="TIGR01049">
    <property type="entry name" value="rpsJ_bact"/>
    <property type="match status" value="1"/>
</dbReference>
<dbReference type="PANTHER" id="PTHR11700">
    <property type="entry name" value="30S RIBOSOMAL PROTEIN S10 FAMILY MEMBER"/>
    <property type="match status" value="1"/>
</dbReference>
<dbReference type="Pfam" id="PF00338">
    <property type="entry name" value="Ribosomal_S10"/>
    <property type="match status" value="1"/>
</dbReference>
<dbReference type="PRINTS" id="PR00971">
    <property type="entry name" value="RIBOSOMALS10"/>
</dbReference>
<dbReference type="SMART" id="SM01403">
    <property type="entry name" value="Ribosomal_S10"/>
    <property type="match status" value="1"/>
</dbReference>
<dbReference type="SUPFAM" id="SSF54999">
    <property type="entry name" value="Ribosomal protein S10"/>
    <property type="match status" value="1"/>
</dbReference>
<dbReference type="PROSITE" id="PS00361">
    <property type="entry name" value="RIBOSOMAL_S10"/>
    <property type="match status" value="1"/>
</dbReference>
<protein>
    <recommendedName>
        <fullName evidence="1">Small ribosomal subunit protein uS10</fullName>
    </recommendedName>
    <alternativeName>
        <fullName evidence="2">30S ribosomal protein S10</fullName>
    </alternativeName>
</protein>
<keyword id="KW-1185">Reference proteome</keyword>
<keyword id="KW-0687">Ribonucleoprotein</keyword>
<keyword id="KW-0689">Ribosomal protein</keyword>
<name>RS10_ACAM1</name>
<comment type="function">
    <text evidence="1">Involved in the binding of tRNA to the ribosomes.</text>
</comment>
<comment type="subunit">
    <text evidence="1">Part of the 30S ribosomal subunit.</text>
</comment>
<comment type="similarity">
    <text evidence="1">Belongs to the universal ribosomal protein uS10 family.</text>
</comment>
<feature type="chain" id="PRO_1000081535" description="Small ribosomal subunit protein uS10">
    <location>
        <begin position="1"/>
        <end position="105"/>
    </location>
</feature>
<reference key="1">
    <citation type="journal article" date="2008" name="Proc. Natl. Acad. Sci. U.S.A.">
        <title>Niche adaptation and genome expansion in the chlorophyll d-producing cyanobacterium Acaryochloris marina.</title>
        <authorList>
            <person name="Swingley W.D."/>
            <person name="Chen M."/>
            <person name="Cheung P.C."/>
            <person name="Conrad A.L."/>
            <person name="Dejesa L.C."/>
            <person name="Hao J."/>
            <person name="Honchak B.M."/>
            <person name="Karbach L.E."/>
            <person name="Kurdoglu A."/>
            <person name="Lahiri S."/>
            <person name="Mastrian S.D."/>
            <person name="Miyashita H."/>
            <person name="Page L."/>
            <person name="Ramakrishna P."/>
            <person name="Satoh S."/>
            <person name="Sattley W.M."/>
            <person name="Shimada Y."/>
            <person name="Taylor H.L."/>
            <person name="Tomo T."/>
            <person name="Tsuchiya T."/>
            <person name="Wang Z.T."/>
            <person name="Raymond J."/>
            <person name="Mimuro M."/>
            <person name="Blankenship R.E."/>
            <person name="Touchman J.W."/>
        </authorList>
    </citation>
    <scope>NUCLEOTIDE SEQUENCE [LARGE SCALE GENOMIC DNA]</scope>
    <source>
        <strain>MBIC 11017</strain>
    </source>
</reference>
<accession>B0CCC9</accession>